<gene>
    <name evidence="1" type="primary">bioB</name>
    <name type="ordered locus">Cpha266_0112</name>
</gene>
<dbReference type="EC" id="2.8.1.6" evidence="1"/>
<dbReference type="EMBL" id="CP000492">
    <property type="protein sequence ID" value="ABL64182.1"/>
    <property type="status" value="ALT_INIT"/>
    <property type="molecule type" value="Genomic_DNA"/>
</dbReference>
<dbReference type="SMR" id="A1BCQ5"/>
<dbReference type="STRING" id="290317.Cpha266_0112"/>
<dbReference type="KEGG" id="cph:Cpha266_0112"/>
<dbReference type="eggNOG" id="COG0502">
    <property type="taxonomic scope" value="Bacteria"/>
</dbReference>
<dbReference type="HOGENOM" id="CLU_033172_2_1_10"/>
<dbReference type="OrthoDB" id="9786826at2"/>
<dbReference type="UniPathway" id="UPA00078">
    <property type="reaction ID" value="UER00162"/>
</dbReference>
<dbReference type="Proteomes" id="UP000008701">
    <property type="component" value="Chromosome"/>
</dbReference>
<dbReference type="GO" id="GO:0051537">
    <property type="term" value="F:2 iron, 2 sulfur cluster binding"/>
    <property type="evidence" value="ECO:0007669"/>
    <property type="project" value="UniProtKB-KW"/>
</dbReference>
<dbReference type="GO" id="GO:0051539">
    <property type="term" value="F:4 iron, 4 sulfur cluster binding"/>
    <property type="evidence" value="ECO:0007669"/>
    <property type="project" value="UniProtKB-KW"/>
</dbReference>
<dbReference type="GO" id="GO:0004076">
    <property type="term" value="F:biotin synthase activity"/>
    <property type="evidence" value="ECO:0007669"/>
    <property type="project" value="UniProtKB-UniRule"/>
</dbReference>
<dbReference type="GO" id="GO:0005506">
    <property type="term" value="F:iron ion binding"/>
    <property type="evidence" value="ECO:0007669"/>
    <property type="project" value="UniProtKB-UniRule"/>
</dbReference>
<dbReference type="GO" id="GO:0009102">
    <property type="term" value="P:biotin biosynthetic process"/>
    <property type="evidence" value="ECO:0007669"/>
    <property type="project" value="UniProtKB-UniRule"/>
</dbReference>
<dbReference type="CDD" id="cd01335">
    <property type="entry name" value="Radical_SAM"/>
    <property type="match status" value="1"/>
</dbReference>
<dbReference type="Gene3D" id="3.20.20.70">
    <property type="entry name" value="Aldolase class I"/>
    <property type="match status" value="1"/>
</dbReference>
<dbReference type="HAMAP" id="MF_01694">
    <property type="entry name" value="BioB"/>
    <property type="match status" value="1"/>
</dbReference>
<dbReference type="InterPro" id="IPR013785">
    <property type="entry name" value="Aldolase_TIM"/>
</dbReference>
<dbReference type="InterPro" id="IPR010722">
    <property type="entry name" value="BATS_dom"/>
</dbReference>
<dbReference type="InterPro" id="IPR002684">
    <property type="entry name" value="Biotin_synth/BioAB"/>
</dbReference>
<dbReference type="InterPro" id="IPR024177">
    <property type="entry name" value="Biotin_synthase"/>
</dbReference>
<dbReference type="InterPro" id="IPR006638">
    <property type="entry name" value="Elp3/MiaA/NifB-like_rSAM"/>
</dbReference>
<dbReference type="InterPro" id="IPR007197">
    <property type="entry name" value="rSAM"/>
</dbReference>
<dbReference type="NCBIfam" id="TIGR00433">
    <property type="entry name" value="bioB"/>
    <property type="match status" value="1"/>
</dbReference>
<dbReference type="PANTHER" id="PTHR22976">
    <property type="entry name" value="BIOTIN SYNTHASE"/>
    <property type="match status" value="1"/>
</dbReference>
<dbReference type="PANTHER" id="PTHR22976:SF2">
    <property type="entry name" value="BIOTIN SYNTHASE, MITOCHONDRIAL"/>
    <property type="match status" value="1"/>
</dbReference>
<dbReference type="Pfam" id="PF06968">
    <property type="entry name" value="BATS"/>
    <property type="match status" value="1"/>
</dbReference>
<dbReference type="Pfam" id="PF04055">
    <property type="entry name" value="Radical_SAM"/>
    <property type="match status" value="1"/>
</dbReference>
<dbReference type="PIRSF" id="PIRSF001619">
    <property type="entry name" value="Biotin_synth"/>
    <property type="match status" value="1"/>
</dbReference>
<dbReference type="SFLD" id="SFLDG01060">
    <property type="entry name" value="BATS_domain_containing"/>
    <property type="match status" value="1"/>
</dbReference>
<dbReference type="SFLD" id="SFLDG01278">
    <property type="entry name" value="biotin_synthase_like"/>
    <property type="match status" value="1"/>
</dbReference>
<dbReference type="SMART" id="SM00876">
    <property type="entry name" value="BATS"/>
    <property type="match status" value="1"/>
</dbReference>
<dbReference type="SMART" id="SM00729">
    <property type="entry name" value="Elp3"/>
    <property type="match status" value="1"/>
</dbReference>
<dbReference type="SUPFAM" id="SSF102114">
    <property type="entry name" value="Radical SAM enzymes"/>
    <property type="match status" value="1"/>
</dbReference>
<dbReference type="PROSITE" id="PS51918">
    <property type="entry name" value="RADICAL_SAM"/>
    <property type="match status" value="1"/>
</dbReference>
<keyword id="KW-0001">2Fe-2S</keyword>
<keyword id="KW-0004">4Fe-4S</keyword>
<keyword id="KW-0093">Biotin biosynthesis</keyword>
<keyword id="KW-0408">Iron</keyword>
<keyword id="KW-0411">Iron-sulfur</keyword>
<keyword id="KW-0479">Metal-binding</keyword>
<keyword id="KW-1185">Reference proteome</keyword>
<keyword id="KW-0949">S-adenosyl-L-methionine</keyword>
<keyword id="KW-0808">Transferase</keyword>
<reference key="1">
    <citation type="submission" date="2006-12" db="EMBL/GenBank/DDBJ databases">
        <title>Complete sequence of Chlorobium phaeobacteroides DSM 266.</title>
        <authorList>
            <consortium name="US DOE Joint Genome Institute"/>
            <person name="Copeland A."/>
            <person name="Lucas S."/>
            <person name="Lapidus A."/>
            <person name="Barry K."/>
            <person name="Detter J.C."/>
            <person name="Glavina del Rio T."/>
            <person name="Hammon N."/>
            <person name="Israni S."/>
            <person name="Pitluck S."/>
            <person name="Goltsman E."/>
            <person name="Schmutz J."/>
            <person name="Larimer F."/>
            <person name="Land M."/>
            <person name="Hauser L."/>
            <person name="Mikhailova N."/>
            <person name="Li T."/>
            <person name="Overmann J."/>
            <person name="Bryant D.A."/>
            <person name="Richardson P."/>
        </authorList>
    </citation>
    <scope>NUCLEOTIDE SEQUENCE [LARGE SCALE GENOMIC DNA]</scope>
    <source>
        <strain>DSM 266 / SMG 266 / 2430</strain>
    </source>
</reference>
<organism>
    <name type="scientific">Chlorobium phaeobacteroides (strain DSM 266 / SMG 266 / 2430)</name>
    <dbReference type="NCBI Taxonomy" id="290317"/>
    <lineage>
        <taxon>Bacteria</taxon>
        <taxon>Pseudomonadati</taxon>
        <taxon>Chlorobiota</taxon>
        <taxon>Chlorobiia</taxon>
        <taxon>Chlorobiales</taxon>
        <taxon>Chlorobiaceae</taxon>
        <taxon>Chlorobium/Pelodictyon group</taxon>
        <taxon>Chlorobium</taxon>
    </lineage>
</organism>
<name>BIOB_CHLPD</name>
<feature type="chain" id="PRO_0000381302" description="Biotin synthase">
    <location>
        <begin position="1"/>
        <end position="334"/>
    </location>
</feature>
<feature type="domain" description="Radical SAM core" evidence="2">
    <location>
        <begin position="55"/>
        <end position="285"/>
    </location>
</feature>
<feature type="binding site" evidence="1">
    <location>
        <position position="73"/>
    </location>
    <ligand>
        <name>[4Fe-4S] cluster</name>
        <dbReference type="ChEBI" id="CHEBI:49883"/>
        <note>4Fe-4S-S-AdoMet</note>
    </ligand>
</feature>
<feature type="binding site" evidence="1">
    <location>
        <position position="77"/>
    </location>
    <ligand>
        <name>[4Fe-4S] cluster</name>
        <dbReference type="ChEBI" id="CHEBI:49883"/>
        <note>4Fe-4S-S-AdoMet</note>
    </ligand>
</feature>
<feature type="binding site" evidence="1">
    <location>
        <position position="80"/>
    </location>
    <ligand>
        <name>[4Fe-4S] cluster</name>
        <dbReference type="ChEBI" id="CHEBI:49883"/>
        <note>4Fe-4S-S-AdoMet</note>
    </ligand>
</feature>
<feature type="binding site" evidence="1">
    <location>
        <position position="152"/>
    </location>
    <ligand>
        <name>[2Fe-2S] cluster</name>
        <dbReference type="ChEBI" id="CHEBI:190135"/>
    </ligand>
</feature>
<feature type="binding site" evidence="1">
    <location>
        <position position="213"/>
    </location>
    <ligand>
        <name>[2Fe-2S] cluster</name>
        <dbReference type="ChEBI" id="CHEBI:190135"/>
    </ligand>
</feature>
<feature type="binding site" evidence="1">
    <location>
        <position position="283"/>
    </location>
    <ligand>
        <name>[2Fe-2S] cluster</name>
        <dbReference type="ChEBI" id="CHEBI:190135"/>
    </ligand>
</feature>
<protein>
    <recommendedName>
        <fullName evidence="1">Biotin synthase</fullName>
        <ecNumber evidence="1">2.8.1.6</ecNumber>
    </recommendedName>
</protein>
<evidence type="ECO:0000255" key="1">
    <source>
        <dbReference type="HAMAP-Rule" id="MF_01694"/>
    </source>
</evidence>
<evidence type="ECO:0000255" key="2">
    <source>
        <dbReference type="PROSITE-ProRule" id="PRU01266"/>
    </source>
</evidence>
<evidence type="ECO:0000305" key="3"/>
<comment type="function">
    <text evidence="1">Catalyzes the conversion of dethiobiotin (DTB) to biotin by the insertion of a sulfur atom into dethiobiotin via a radical-based mechanism.</text>
</comment>
<comment type="catalytic activity">
    <reaction evidence="1">
        <text>(4R,5S)-dethiobiotin + (sulfur carrier)-SH + 2 reduced [2Fe-2S]-[ferredoxin] + 2 S-adenosyl-L-methionine = (sulfur carrier)-H + biotin + 2 5'-deoxyadenosine + 2 L-methionine + 2 oxidized [2Fe-2S]-[ferredoxin]</text>
        <dbReference type="Rhea" id="RHEA:22060"/>
        <dbReference type="Rhea" id="RHEA-COMP:10000"/>
        <dbReference type="Rhea" id="RHEA-COMP:10001"/>
        <dbReference type="Rhea" id="RHEA-COMP:14737"/>
        <dbReference type="Rhea" id="RHEA-COMP:14739"/>
        <dbReference type="ChEBI" id="CHEBI:17319"/>
        <dbReference type="ChEBI" id="CHEBI:29917"/>
        <dbReference type="ChEBI" id="CHEBI:33737"/>
        <dbReference type="ChEBI" id="CHEBI:33738"/>
        <dbReference type="ChEBI" id="CHEBI:57586"/>
        <dbReference type="ChEBI" id="CHEBI:57844"/>
        <dbReference type="ChEBI" id="CHEBI:59789"/>
        <dbReference type="ChEBI" id="CHEBI:64428"/>
        <dbReference type="ChEBI" id="CHEBI:149473"/>
        <dbReference type="EC" id="2.8.1.6"/>
    </reaction>
</comment>
<comment type="cofactor">
    <cofactor evidence="1">
        <name>[4Fe-4S] cluster</name>
        <dbReference type="ChEBI" id="CHEBI:49883"/>
    </cofactor>
    <text evidence="1">Binds 1 [4Fe-4S] cluster. The cluster is coordinated with 3 cysteines and an exchangeable S-adenosyl-L-methionine.</text>
</comment>
<comment type="cofactor">
    <cofactor evidence="1">
        <name>[2Fe-2S] cluster</name>
        <dbReference type="ChEBI" id="CHEBI:190135"/>
    </cofactor>
    <text evidence="1">Binds 1 [2Fe-2S] cluster. The cluster is coordinated with 3 cysteines and 1 arginine.</text>
</comment>
<comment type="pathway">
    <text evidence="1">Cofactor biosynthesis; biotin biosynthesis; biotin from 7,8-diaminononanoate: step 2/2.</text>
</comment>
<comment type="subunit">
    <text evidence="1">Homodimer.</text>
</comment>
<comment type="similarity">
    <text evidence="1">Belongs to the radical SAM superfamily. Biotin synthase family.</text>
</comment>
<comment type="sequence caution" evidence="3">
    <conflict type="erroneous initiation">
        <sequence resource="EMBL-CDS" id="ABL64182"/>
    </conflict>
</comment>
<sequence>MRPVPLHPDILQAYAVLETGEPVCRELAFALGELHGPDVLDLASLAHKVKLRHGGSSGSIHACSIMNARSGVCSENCRFCAQSAHHQAAIDVYGLVDVDAVLFHARQTASEGISHFGIVTSGFGYKTLSKEFRQILAMIDRLHQELPDLEICASLGVLGEEPALELARHGIAQYNINIQVAPRRYGELIADTHSVDDRIDTIKRLRRNNIDVCCGGIIGVGEQMKERVEMIFAFADLDVSVIPLNILVPIDGTPLEGSPGIPLDDIVKTFALCRLVHPRKIIKIAAGRETVMKDFQGLLMLSGADGLLTGGYLTTRGRATADDRMFMRQLQWFN</sequence>
<proteinExistence type="inferred from homology"/>
<accession>A1BCQ5</accession>